<proteinExistence type="evidence at protein level"/>
<gene>
    <name evidence="8" type="primary">Lipt2</name>
</gene>
<name>LIPT2_MOUSE</name>
<evidence type="ECO:0000250" key="1"/>
<evidence type="ECO:0000250" key="2">
    <source>
        <dbReference type="UniProtKB" id="A6NK58"/>
    </source>
</evidence>
<evidence type="ECO:0000255" key="3"/>
<evidence type="ECO:0000255" key="4">
    <source>
        <dbReference type="PROSITE-ProRule" id="PRU01067"/>
    </source>
</evidence>
<evidence type="ECO:0000269" key="5">
    <source>
    </source>
</evidence>
<evidence type="ECO:0000305" key="6"/>
<evidence type="ECO:0000305" key="7">
    <source>
    </source>
</evidence>
<evidence type="ECO:0000312" key="8">
    <source>
        <dbReference type="MGI" id="MGI:1914414"/>
    </source>
</evidence>
<evidence type="ECO:0007744" key="9">
    <source>
    </source>
</evidence>
<accession>Q9D009</accession>
<accession>Q14C29</accession>
<accession>Q9CVA5</accession>
<sequence>MSLPVVRLVWLGRVHYSELLALQEHWLRRLQADPRPGTLSGTKAGVLLVCEPAGPVYTGGLRGGLTPEETTRLRALGAEVRATGRGGLATFHGPGQLLCHPVLDLRLLGLRLRTHVAALEACAVRLCELRGLQGARARPPPYTGVWLGERKICAIGVRCGRHITSHGLALNCSTDLTWFEHIVPCGLVGTGVTSLSEALQRLVTVDEVMPSFLVAFKETFKCTLISEDSPS</sequence>
<organism>
    <name type="scientific">Mus musculus</name>
    <name type="common">Mouse</name>
    <dbReference type="NCBI Taxonomy" id="10090"/>
    <lineage>
        <taxon>Eukaryota</taxon>
        <taxon>Metazoa</taxon>
        <taxon>Chordata</taxon>
        <taxon>Craniata</taxon>
        <taxon>Vertebrata</taxon>
        <taxon>Euteleostomi</taxon>
        <taxon>Mammalia</taxon>
        <taxon>Eutheria</taxon>
        <taxon>Euarchontoglires</taxon>
        <taxon>Glires</taxon>
        <taxon>Rodentia</taxon>
        <taxon>Myomorpha</taxon>
        <taxon>Muroidea</taxon>
        <taxon>Muridae</taxon>
        <taxon>Murinae</taxon>
        <taxon>Mus</taxon>
        <taxon>Mus</taxon>
    </lineage>
</organism>
<reference key="1">
    <citation type="journal article" date="2005" name="Science">
        <title>The transcriptional landscape of the mammalian genome.</title>
        <authorList>
            <person name="Carninci P."/>
            <person name="Kasukawa T."/>
            <person name="Katayama S."/>
            <person name="Gough J."/>
            <person name="Frith M.C."/>
            <person name="Maeda N."/>
            <person name="Oyama R."/>
            <person name="Ravasi T."/>
            <person name="Lenhard B."/>
            <person name="Wells C."/>
            <person name="Kodzius R."/>
            <person name="Shimokawa K."/>
            <person name="Bajic V.B."/>
            <person name="Brenner S.E."/>
            <person name="Batalov S."/>
            <person name="Forrest A.R."/>
            <person name="Zavolan M."/>
            <person name="Davis M.J."/>
            <person name="Wilming L.G."/>
            <person name="Aidinis V."/>
            <person name="Allen J.E."/>
            <person name="Ambesi-Impiombato A."/>
            <person name="Apweiler R."/>
            <person name="Aturaliya R.N."/>
            <person name="Bailey T.L."/>
            <person name="Bansal M."/>
            <person name="Baxter L."/>
            <person name="Beisel K.W."/>
            <person name="Bersano T."/>
            <person name="Bono H."/>
            <person name="Chalk A.M."/>
            <person name="Chiu K.P."/>
            <person name="Choudhary V."/>
            <person name="Christoffels A."/>
            <person name="Clutterbuck D.R."/>
            <person name="Crowe M.L."/>
            <person name="Dalla E."/>
            <person name="Dalrymple B.P."/>
            <person name="de Bono B."/>
            <person name="Della Gatta G."/>
            <person name="di Bernardo D."/>
            <person name="Down T."/>
            <person name="Engstrom P."/>
            <person name="Fagiolini M."/>
            <person name="Faulkner G."/>
            <person name="Fletcher C.F."/>
            <person name="Fukushima T."/>
            <person name="Furuno M."/>
            <person name="Futaki S."/>
            <person name="Gariboldi M."/>
            <person name="Georgii-Hemming P."/>
            <person name="Gingeras T.R."/>
            <person name="Gojobori T."/>
            <person name="Green R.E."/>
            <person name="Gustincich S."/>
            <person name="Harbers M."/>
            <person name="Hayashi Y."/>
            <person name="Hensch T.K."/>
            <person name="Hirokawa N."/>
            <person name="Hill D."/>
            <person name="Huminiecki L."/>
            <person name="Iacono M."/>
            <person name="Ikeo K."/>
            <person name="Iwama A."/>
            <person name="Ishikawa T."/>
            <person name="Jakt M."/>
            <person name="Kanapin A."/>
            <person name="Katoh M."/>
            <person name="Kawasawa Y."/>
            <person name="Kelso J."/>
            <person name="Kitamura H."/>
            <person name="Kitano H."/>
            <person name="Kollias G."/>
            <person name="Krishnan S.P."/>
            <person name="Kruger A."/>
            <person name="Kummerfeld S.K."/>
            <person name="Kurochkin I.V."/>
            <person name="Lareau L.F."/>
            <person name="Lazarevic D."/>
            <person name="Lipovich L."/>
            <person name="Liu J."/>
            <person name="Liuni S."/>
            <person name="McWilliam S."/>
            <person name="Madan Babu M."/>
            <person name="Madera M."/>
            <person name="Marchionni L."/>
            <person name="Matsuda H."/>
            <person name="Matsuzawa S."/>
            <person name="Miki H."/>
            <person name="Mignone F."/>
            <person name="Miyake S."/>
            <person name="Morris K."/>
            <person name="Mottagui-Tabar S."/>
            <person name="Mulder N."/>
            <person name="Nakano N."/>
            <person name="Nakauchi H."/>
            <person name="Ng P."/>
            <person name="Nilsson R."/>
            <person name="Nishiguchi S."/>
            <person name="Nishikawa S."/>
            <person name="Nori F."/>
            <person name="Ohara O."/>
            <person name="Okazaki Y."/>
            <person name="Orlando V."/>
            <person name="Pang K.C."/>
            <person name="Pavan W.J."/>
            <person name="Pavesi G."/>
            <person name="Pesole G."/>
            <person name="Petrovsky N."/>
            <person name="Piazza S."/>
            <person name="Reed J."/>
            <person name="Reid J.F."/>
            <person name="Ring B.Z."/>
            <person name="Ringwald M."/>
            <person name="Rost B."/>
            <person name="Ruan Y."/>
            <person name="Salzberg S.L."/>
            <person name="Sandelin A."/>
            <person name="Schneider C."/>
            <person name="Schoenbach C."/>
            <person name="Sekiguchi K."/>
            <person name="Semple C.A."/>
            <person name="Seno S."/>
            <person name="Sessa L."/>
            <person name="Sheng Y."/>
            <person name="Shibata Y."/>
            <person name="Shimada H."/>
            <person name="Shimada K."/>
            <person name="Silva D."/>
            <person name="Sinclair B."/>
            <person name="Sperling S."/>
            <person name="Stupka E."/>
            <person name="Sugiura K."/>
            <person name="Sultana R."/>
            <person name="Takenaka Y."/>
            <person name="Taki K."/>
            <person name="Tammoja K."/>
            <person name="Tan S.L."/>
            <person name="Tang S."/>
            <person name="Taylor M.S."/>
            <person name="Tegner J."/>
            <person name="Teichmann S.A."/>
            <person name="Ueda H.R."/>
            <person name="van Nimwegen E."/>
            <person name="Verardo R."/>
            <person name="Wei C.L."/>
            <person name="Yagi K."/>
            <person name="Yamanishi H."/>
            <person name="Zabarovsky E."/>
            <person name="Zhu S."/>
            <person name="Zimmer A."/>
            <person name="Hide W."/>
            <person name="Bult C."/>
            <person name="Grimmond S.M."/>
            <person name="Teasdale R.D."/>
            <person name="Liu E.T."/>
            <person name="Brusic V."/>
            <person name="Quackenbush J."/>
            <person name="Wahlestedt C."/>
            <person name="Mattick J.S."/>
            <person name="Hume D.A."/>
            <person name="Kai C."/>
            <person name="Sasaki D."/>
            <person name="Tomaru Y."/>
            <person name="Fukuda S."/>
            <person name="Kanamori-Katayama M."/>
            <person name="Suzuki M."/>
            <person name="Aoki J."/>
            <person name="Arakawa T."/>
            <person name="Iida J."/>
            <person name="Imamura K."/>
            <person name="Itoh M."/>
            <person name="Kato T."/>
            <person name="Kawaji H."/>
            <person name="Kawagashira N."/>
            <person name="Kawashima T."/>
            <person name="Kojima M."/>
            <person name="Kondo S."/>
            <person name="Konno H."/>
            <person name="Nakano K."/>
            <person name="Ninomiya N."/>
            <person name="Nishio T."/>
            <person name="Okada M."/>
            <person name="Plessy C."/>
            <person name="Shibata K."/>
            <person name="Shiraki T."/>
            <person name="Suzuki S."/>
            <person name="Tagami M."/>
            <person name="Waki K."/>
            <person name="Watahiki A."/>
            <person name="Okamura-Oho Y."/>
            <person name="Suzuki H."/>
            <person name="Kawai J."/>
            <person name="Hayashizaki Y."/>
        </authorList>
    </citation>
    <scope>NUCLEOTIDE SEQUENCE [LARGE SCALE MRNA]</scope>
    <source>
        <strain>C57BL/6J</strain>
        <tissue>Embryo</tissue>
        <tissue>Stomach</tissue>
    </source>
</reference>
<reference key="2">
    <citation type="journal article" date="2004" name="Genome Res.">
        <title>The status, quality, and expansion of the NIH full-length cDNA project: the Mammalian Gene Collection (MGC).</title>
        <authorList>
            <consortium name="The MGC Project Team"/>
        </authorList>
    </citation>
    <scope>NUCLEOTIDE SEQUENCE [LARGE SCALE MRNA]</scope>
</reference>
<reference key="3">
    <citation type="journal article" date="2010" name="Cell">
        <title>A tissue-specific atlas of mouse protein phosphorylation and expression.</title>
        <authorList>
            <person name="Huttlin E.L."/>
            <person name="Jedrychowski M.P."/>
            <person name="Elias J.E."/>
            <person name="Goswami T."/>
            <person name="Rad R."/>
            <person name="Beausoleil S.A."/>
            <person name="Villen J."/>
            <person name="Haas W."/>
            <person name="Sowa M.E."/>
            <person name="Gygi S.P."/>
        </authorList>
    </citation>
    <scope>IDENTIFICATION BY MASS SPECTROMETRY [LARGE SCALE ANALYSIS]</scope>
    <source>
        <tissue>Brain</tissue>
        <tissue>Brown adipose tissue</tissue>
        <tissue>Liver</tissue>
        <tissue>Testis</tissue>
    </source>
</reference>
<reference key="4">
    <citation type="journal article" date="2013" name="Mol. Cell">
        <title>SIRT5-mediated lysine desuccinylation impacts diverse metabolic pathways.</title>
        <authorList>
            <person name="Park J."/>
            <person name="Chen Y."/>
            <person name="Tishkoff D.X."/>
            <person name="Peng C."/>
            <person name="Tan M."/>
            <person name="Dai L."/>
            <person name="Xie Z."/>
            <person name="Zhang Y."/>
            <person name="Zwaans B.M."/>
            <person name="Skinner M.E."/>
            <person name="Lombard D.B."/>
            <person name="Zhao Y."/>
        </authorList>
    </citation>
    <scope>SUCCINYLATION [LARGE SCALE ANALYSIS] AT LYS-43</scope>
    <scope>IDENTIFICATION BY MASS SPECTROMETRY [LARGE SCALE ANALYSIS]</scope>
    <source>
        <tissue>Liver</tissue>
    </source>
</reference>
<reference key="5">
    <citation type="journal article" date="2018" name="Proc. Natl. Acad. Sci. U.S.A.">
        <title>Protein moonlighting elucidates the essential human pathway catalyzing lipoic acid assembly on its cognate enzymes.</title>
        <authorList>
            <person name="Cao X."/>
            <person name="Zhu L."/>
            <person name="Song X."/>
            <person name="Hu Z."/>
            <person name="Cronan J.E."/>
        </authorList>
    </citation>
    <scope>FUNCTION</scope>
    <scope>CATALYTIC ACTIVITY</scope>
    <scope>MUTAGENESIS OF CYS-185</scope>
</reference>
<feature type="transit peptide" description="Mitochondrion" evidence="3">
    <location>
        <begin position="1"/>
        <end status="unknown"/>
    </location>
</feature>
<feature type="chain" id="PRO_0000332306" description="Octanoyl-[acyl-carrier-protein]:protein N-octanoyltransferase LIPT2, mitochondrial">
    <location>
        <begin status="unknown"/>
        <end position="231"/>
    </location>
</feature>
<feature type="domain" description="BPL/LPL catalytic" evidence="4">
    <location>
        <begin position="41"/>
        <end position="224"/>
    </location>
</feature>
<feature type="active site" description="Acyl-thioester intermediate" evidence="1">
    <location>
        <position position="185"/>
    </location>
</feature>
<feature type="binding site" evidence="1">
    <location>
        <begin position="85"/>
        <end position="92"/>
    </location>
    <ligand>
        <name>substrate</name>
    </ligand>
</feature>
<feature type="binding site" evidence="1">
    <location>
        <begin position="154"/>
        <end position="156"/>
    </location>
    <ligand>
        <name>substrate</name>
    </ligand>
</feature>
<feature type="binding site" evidence="1">
    <location>
        <begin position="167"/>
        <end position="169"/>
    </location>
    <ligand>
        <name>substrate</name>
    </ligand>
</feature>
<feature type="site" description="Lowers pKa of active site Cys" evidence="1">
    <location>
        <position position="151"/>
    </location>
</feature>
<feature type="modified residue" description="N6-succinyllysine" evidence="9">
    <location>
        <position position="43"/>
    </location>
</feature>
<feature type="mutagenesis site" description="Loss of octanoyl transferase activity." evidence="5">
    <original>C</original>
    <variation>A</variation>
    <variation>S</variation>
    <location>
        <position position="185"/>
    </location>
</feature>
<feature type="sequence conflict" description="In Ref. 1; BAB27920." evidence="6" ref="1">
    <original>T</original>
    <variation>A</variation>
    <location>
        <position position="190"/>
    </location>
</feature>
<comment type="function">
    <text evidence="2 5">Catalyzes the transfer of endogenously produced octanoic acid from octanoyl-acyl-carrier-protein onto the lipoyl domains of lipoate-dependent enzymes such as the protein H of the glycine cleavage system (GCSH) (PubMed:29987032). Lipoyl-ACP can also act as a substrate although octanoyl-ACP is likely to be the physiological substrate (By similarity).</text>
</comment>
<comment type="catalytic activity">
    <reaction evidence="5">
        <text>octanoyl-[ACP] + L-lysyl-[protein] = N(6)-octanoyl-L-lysyl-[protein] + holo-[ACP] + H(+)</text>
        <dbReference type="Rhea" id="RHEA:17665"/>
        <dbReference type="Rhea" id="RHEA-COMP:9636"/>
        <dbReference type="Rhea" id="RHEA-COMP:9685"/>
        <dbReference type="Rhea" id="RHEA-COMP:9752"/>
        <dbReference type="Rhea" id="RHEA-COMP:9928"/>
        <dbReference type="ChEBI" id="CHEBI:15378"/>
        <dbReference type="ChEBI" id="CHEBI:29969"/>
        <dbReference type="ChEBI" id="CHEBI:64479"/>
        <dbReference type="ChEBI" id="CHEBI:78463"/>
        <dbReference type="ChEBI" id="CHEBI:78809"/>
        <dbReference type="EC" id="2.3.1.181"/>
    </reaction>
    <physiologicalReaction direction="left-to-right" evidence="5">
        <dbReference type="Rhea" id="RHEA:17666"/>
    </physiologicalReaction>
</comment>
<comment type="pathway">
    <text>Protein modification; protein lipoylation via endogenous pathway; protein N(6)-(lipoyl)lysine from octanoyl-[acyl-carrier-protein]: step 1/2.</text>
</comment>
<comment type="subcellular location">
    <subcellularLocation>
        <location evidence="2">Mitochondrion</location>
    </subcellularLocation>
</comment>
<comment type="miscellaneous">
    <text evidence="1">In the reaction, the free carboxyl group of octanoic acid is attached via an amide linkage to the epsilon-amino group of a specific lysine residue of lipoyl domains of lipoate-dependent enzymes.</text>
</comment>
<comment type="similarity">
    <text evidence="6">Belongs to the LipB family.</text>
</comment>
<keyword id="KW-0012">Acyltransferase</keyword>
<keyword id="KW-0436">Ligase</keyword>
<keyword id="KW-0496">Mitochondrion</keyword>
<keyword id="KW-1185">Reference proteome</keyword>
<keyword id="KW-0808">Transferase</keyword>
<keyword id="KW-0809">Transit peptide</keyword>
<protein>
    <recommendedName>
        <fullName evidence="7">Octanoyl-[acyl-carrier-protein]:protein N-octanoyltransferase LIPT2, mitochondrial</fullName>
        <ecNumber evidence="5">2.3.1.181</ecNumber>
    </recommendedName>
    <alternativeName>
        <fullName>Lipoate-protein ligase B</fullName>
    </alternativeName>
    <alternativeName>
        <fullName>Lipoyl/octanoyl transferase</fullName>
    </alternativeName>
    <alternativeName>
        <fullName>Lipoyltransferase 2</fullName>
    </alternativeName>
</protein>
<dbReference type="EC" id="2.3.1.181" evidence="5"/>
<dbReference type="EMBL" id="AK008917">
    <property type="protein sequence ID" value="BAB25967.1"/>
    <property type="molecule type" value="mRNA"/>
</dbReference>
<dbReference type="EMBL" id="AK011925">
    <property type="protein sequence ID" value="BAB27920.1"/>
    <property type="molecule type" value="mRNA"/>
</dbReference>
<dbReference type="EMBL" id="BC115472">
    <property type="protein sequence ID" value="AAI15473.1"/>
    <property type="molecule type" value="mRNA"/>
</dbReference>
<dbReference type="EMBL" id="BC115473">
    <property type="protein sequence ID" value="AAI15474.1"/>
    <property type="molecule type" value="mRNA"/>
</dbReference>
<dbReference type="CCDS" id="CCDS21494.1"/>
<dbReference type="RefSeq" id="NP_080286.2">
    <property type="nucleotide sequence ID" value="NM_026010.2"/>
</dbReference>
<dbReference type="SMR" id="Q9D009"/>
<dbReference type="BioGRID" id="211989">
    <property type="interactions" value="3"/>
</dbReference>
<dbReference type="FunCoup" id="Q9D009">
    <property type="interactions" value="1538"/>
</dbReference>
<dbReference type="STRING" id="10090.ENSMUSP00000032967"/>
<dbReference type="iPTMnet" id="Q9D009"/>
<dbReference type="PhosphoSitePlus" id="Q9D009"/>
<dbReference type="SwissPalm" id="Q9D009"/>
<dbReference type="PaxDb" id="10090-ENSMUSP00000032967"/>
<dbReference type="PeptideAtlas" id="Q9D009"/>
<dbReference type="ProteomicsDB" id="292099"/>
<dbReference type="Pumba" id="Q9D009"/>
<dbReference type="Antibodypedia" id="48064">
    <property type="antibodies" value="81 antibodies from 16 providers"/>
</dbReference>
<dbReference type="DNASU" id="67164"/>
<dbReference type="Ensembl" id="ENSMUST00000032967.4">
    <property type="protein sequence ID" value="ENSMUSP00000032967.4"/>
    <property type="gene ID" value="ENSMUSG00000030725.5"/>
</dbReference>
<dbReference type="GeneID" id="67164"/>
<dbReference type="KEGG" id="mmu:67164"/>
<dbReference type="UCSC" id="uc009iml.2">
    <property type="organism name" value="mouse"/>
</dbReference>
<dbReference type="AGR" id="MGI:1914414"/>
<dbReference type="CTD" id="387787"/>
<dbReference type="MGI" id="MGI:1914414">
    <property type="gene designation" value="Lipt2"/>
</dbReference>
<dbReference type="VEuPathDB" id="HostDB:ENSMUSG00000030725"/>
<dbReference type="eggNOG" id="KOG0325">
    <property type="taxonomic scope" value="Eukaryota"/>
</dbReference>
<dbReference type="GeneTree" id="ENSGT00390000006450"/>
<dbReference type="HOGENOM" id="CLU_035168_1_2_1"/>
<dbReference type="InParanoid" id="Q9D009"/>
<dbReference type="OMA" id="GEVTYHC"/>
<dbReference type="OrthoDB" id="19908at2759"/>
<dbReference type="PhylomeDB" id="Q9D009"/>
<dbReference type="TreeFam" id="TF314262"/>
<dbReference type="BRENDA" id="2.3.1.181">
    <property type="organism ID" value="3474"/>
</dbReference>
<dbReference type="Reactome" id="R-MMU-9857492">
    <property type="pathway name" value="Protein lipoylation"/>
</dbReference>
<dbReference type="UniPathway" id="UPA00538">
    <property type="reaction ID" value="UER00592"/>
</dbReference>
<dbReference type="BioGRID-ORCS" id="67164">
    <property type="hits" value="22 hits in 78 CRISPR screens"/>
</dbReference>
<dbReference type="ChiTaRS" id="Lipt2">
    <property type="organism name" value="mouse"/>
</dbReference>
<dbReference type="PRO" id="PR:Q9D009"/>
<dbReference type="Proteomes" id="UP000000589">
    <property type="component" value="Chromosome 7"/>
</dbReference>
<dbReference type="RNAct" id="Q9D009">
    <property type="molecule type" value="protein"/>
</dbReference>
<dbReference type="Bgee" id="ENSMUSG00000030725">
    <property type="expression patterns" value="Expressed in epithelium of lens and 183 other cell types or tissues"/>
</dbReference>
<dbReference type="ExpressionAtlas" id="Q9D009">
    <property type="expression patterns" value="baseline and differential"/>
</dbReference>
<dbReference type="GO" id="GO:0005739">
    <property type="term" value="C:mitochondrion"/>
    <property type="evidence" value="ECO:0007005"/>
    <property type="project" value="MGI"/>
</dbReference>
<dbReference type="GO" id="GO:0016874">
    <property type="term" value="F:ligase activity"/>
    <property type="evidence" value="ECO:0007669"/>
    <property type="project" value="UniProtKB-KW"/>
</dbReference>
<dbReference type="GO" id="GO:0033819">
    <property type="term" value="F:lipoyl(octanoyl) transferase activity"/>
    <property type="evidence" value="ECO:0000314"/>
    <property type="project" value="UniProtKB"/>
</dbReference>
<dbReference type="GO" id="GO:2000376">
    <property type="term" value="P:positive regulation of oxygen metabolic process"/>
    <property type="evidence" value="ECO:0000250"/>
    <property type="project" value="UniProtKB"/>
</dbReference>
<dbReference type="GO" id="GO:0009249">
    <property type="term" value="P:protein lipoylation"/>
    <property type="evidence" value="ECO:0000250"/>
    <property type="project" value="UniProtKB"/>
</dbReference>
<dbReference type="CDD" id="cd16444">
    <property type="entry name" value="LipB"/>
    <property type="match status" value="1"/>
</dbReference>
<dbReference type="FunFam" id="3.30.930.10:FF:000035">
    <property type="entry name" value="Putative lipoyltransferase 2, mitochondrial"/>
    <property type="match status" value="1"/>
</dbReference>
<dbReference type="Gene3D" id="3.30.930.10">
    <property type="entry name" value="Bira Bifunctional Protein, Domain 2"/>
    <property type="match status" value="1"/>
</dbReference>
<dbReference type="InterPro" id="IPR045864">
    <property type="entry name" value="aa-tRNA-synth_II/BPL/LPL"/>
</dbReference>
<dbReference type="InterPro" id="IPR004143">
    <property type="entry name" value="BPL_LPL_catalytic"/>
</dbReference>
<dbReference type="InterPro" id="IPR000544">
    <property type="entry name" value="Octanoyltransferase"/>
</dbReference>
<dbReference type="NCBIfam" id="TIGR00214">
    <property type="entry name" value="lipB"/>
    <property type="match status" value="1"/>
</dbReference>
<dbReference type="PANTHER" id="PTHR10993:SF7">
    <property type="entry name" value="LIPOYLTRANSFERASE 2, MITOCHONDRIAL-RELATED"/>
    <property type="match status" value="1"/>
</dbReference>
<dbReference type="PANTHER" id="PTHR10993">
    <property type="entry name" value="OCTANOYLTRANSFERASE"/>
    <property type="match status" value="1"/>
</dbReference>
<dbReference type="Pfam" id="PF21948">
    <property type="entry name" value="LplA-B_cat"/>
    <property type="match status" value="1"/>
</dbReference>
<dbReference type="PIRSF" id="PIRSF016262">
    <property type="entry name" value="LPLase"/>
    <property type="match status" value="1"/>
</dbReference>
<dbReference type="SUPFAM" id="SSF55681">
    <property type="entry name" value="Class II aaRS and biotin synthetases"/>
    <property type="match status" value="1"/>
</dbReference>
<dbReference type="PROSITE" id="PS51733">
    <property type="entry name" value="BPL_LPL_CATALYTIC"/>
    <property type="match status" value="1"/>
</dbReference>